<evidence type="ECO:0000255" key="1">
    <source>
        <dbReference type="HAMAP-Rule" id="MF_00328"/>
    </source>
</evidence>
<gene>
    <name evidence="1" type="primary">gmk</name>
    <name type="ordered locus">Lxx11120</name>
</gene>
<organism>
    <name type="scientific">Leifsonia xyli subsp. xyli (strain CTCB07)</name>
    <dbReference type="NCBI Taxonomy" id="281090"/>
    <lineage>
        <taxon>Bacteria</taxon>
        <taxon>Bacillati</taxon>
        <taxon>Actinomycetota</taxon>
        <taxon>Actinomycetes</taxon>
        <taxon>Micrococcales</taxon>
        <taxon>Microbacteriaceae</taxon>
        <taxon>Leifsonia</taxon>
    </lineage>
</organism>
<protein>
    <recommendedName>
        <fullName evidence="1">Guanylate kinase</fullName>
        <ecNumber evidence="1">2.7.4.8</ecNumber>
    </recommendedName>
    <alternativeName>
        <fullName evidence="1">GMP kinase</fullName>
    </alternativeName>
</protein>
<sequence length="254" mass="28385">MEGRIRVTEFLLSVPAIGTTKTQDALRRLGIAPSKRLGGLGRHQRLRLRVFLIEREERPVRRRKHLVVLAGPTAVGKGTVSAYIRENYPEVLLSVSATTRSPRPGEVDGVNYYFVDDAAFDRMIAAGDLLEHATVHNAYRYGTPRAPIEKALDDGRSVLLEIDLQGARQVRASMPEARLIFLLPPTWEELVRRLTGRGTEDAAEQQRRLETAKVELAAQNEFDHRVVNHTVADAAREVVDLMMVRPAPVRPSTA</sequence>
<dbReference type="EC" id="2.7.4.8" evidence="1"/>
<dbReference type="EMBL" id="AE016822">
    <property type="protein sequence ID" value="AAT88963.1"/>
    <property type="molecule type" value="Genomic_DNA"/>
</dbReference>
<dbReference type="SMR" id="Q6AF82"/>
<dbReference type="STRING" id="281090.Lxx11120"/>
<dbReference type="KEGG" id="lxx:Lxx11120"/>
<dbReference type="eggNOG" id="COG0194">
    <property type="taxonomic scope" value="Bacteria"/>
</dbReference>
<dbReference type="HOGENOM" id="CLU_001715_0_1_11"/>
<dbReference type="Proteomes" id="UP000001306">
    <property type="component" value="Chromosome"/>
</dbReference>
<dbReference type="GO" id="GO:0005829">
    <property type="term" value="C:cytosol"/>
    <property type="evidence" value="ECO:0007669"/>
    <property type="project" value="TreeGrafter"/>
</dbReference>
<dbReference type="GO" id="GO:0005524">
    <property type="term" value="F:ATP binding"/>
    <property type="evidence" value="ECO:0007669"/>
    <property type="project" value="UniProtKB-UniRule"/>
</dbReference>
<dbReference type="GO" id="GO:0004385">
    <property type="term" value="F:guanylate kinase activity"/>
    <property type="evidence" value="ECO:0007669"/>
    <property type="project" value="UniProtKB-UniRule"/>
</dbReference>
<dbReference type="CDD" id="cd00071">
    <property type="entry name" value="GMPK"/>
    <property type="match status" value="1"/>
</dbReference>
<dbReference type="FunFam" id="3.30.63.10:FF:000002">
    <property type="entry name" value="Guanylate kinase 1"/>
    <property type="match status" value="1"/>
</dbReference>
<dbReference type="Gene3D" id="1.10.8.50">
    <property type="match status" value="1"/>
</dbReference>
<dbReference type="Gene3D" id="3.30.63.10">
    <property type="entry name" value="Guanylate Kinase phosphate binding domain"/>
    <property type="match status" value="1"/>
</dbReference>
<dbReference type="Gene3D" id="3.40.50.300">
    <property type="entry name" value="P-loop containing nucleotide triphosphate hydrolases"/>
    <property type="match status" value="1"/>
</dbReference>
<dbReference type="HAMAP" id="MF_00328">
    <property type="entry name" value="Guanylate_kinase"/>
    <property type="match status" value="1"/>
</dbReference>
<dbReference type="InterPro" id="IPR008145">
    <property type="entry name" value="GK/Ca_channel_bsu"/>
</dbReference>
<dbReference type="InterPro" id="IPR008144">
    <property type="entry name" value="Guanylate_kin-like_dom"/>
</dbReference>
<dbReference type="InterPro" id="IPR017665">
    <property type="entry name" value="Guanylate_kinase"/>
</dbReference>
<dbReference type="InterPro" id="IPR020590">
    <property type="entry name" value="Guanylate_kinase_CS"/>
</dbReference>
<dbReference type="InterPro" id="IPR055201">
    <property type="entry name" value="IHF-like_H2TH"/>
</dbReference>
<dbReference type="InterPro" id="IPR027417">
    <property type="entry name" value="P-loop_NTPase"/>
</dbReference>
<dbReference type="NCBIfam" id="TIGR03263">
    <property type="entry name" value="guanyl_kin"/>
    <property type="match status" value="1"/>
</dbReference>
<dbReference type="PANTHER" id="PTHR23117:SF13">
    <property type="entry name" value="GUANYLATE KINASE"/>
    <property type="match status" value="1"/>
</dbReference>
<dbReference type="PANTHER" id="PTHR23117">
    <property type="entry name" value="GUANYLATE KINASE-RELATED"/>
    <property type="match status" value="1"/>
</dbReference>
<dbReference type="Pfam" id="PF00625">
    <property type="entry name" value="Guanylate_kin"/>
    <property type="match status" value="1"/>
</dbReference>
<dbReference type="Pfam" id="PF22525">
    <property type="entry name" value="H2TH_5"/>
    <property type="match status" value="1"/>
</dbReference>
<dbReference type="SMART" id="SM00072">
    <property type="entry name" value="GuKc"/>
    <property type="match status" value="1"/>
</dbReference>
<dbReference type="SUPFAM" id="SSF52540">
    <property type="entry name" value="P-loop containing nucleoside triphosphate hydrolases"/>
    <property type="match status" value="1"/>
</dbReference>
<dbReference type="PROSITE" id="PS00856">
    <property type="entry name" value="GUANYLATE_KINASE_1"/>
    <property type="match status" value="1"/>
</dbReference>
<dbReference type="PROSITE" id="PS50052">
    <property type="entry name" value="GUANYLATE_KINASE_2"/>
    <property type="match status" value="1"/>
</dbReference>
<proteinExistence type="inferred from homology"/>
<accession>Q6AF82</accession>
<name>KGUA_LEIXX</name>
<keyword id="KW-0067">ATP-binding</keyword>
<keyword id="KW-0963">Cytoplasm</keyword>
<keyword id="KW-0418">Kinase</keyword>
<keyword id="KW-0547">Nucleotide-binding</keyword>
<keyword id="KW-1185">Reference proteome</keyword>
<keyword id="KW-0808">Transferase</keyword>
<comment type="function">
    <text evidence="1">Essential for recycling GMP and indirectly, cGMP.</text>
</comment>
<comment type="catalytic activity">
    <reaction evidence="1">
        <text>GMP + ATP = GDP + ADP</text>
        <dbReference type="Rhea" id="RHEA:20780"/>
        <dbReference type="ChEBI" id="CHEBI:30616"/>
        <dbReference type="ChEBI" id="CHEBI:58115"/>
        <dbReference type="ChEBI" id="CHEBI:58189"/>
        <dbReference type="ChEBI" id="CHEBI:456216"/>
        <dbReference type="EC" id="2.7.4.8"/>
    </reaction>
</comment>
<comment type="subcellular location">
    <subcellularLocation>
        <location evidence="1">Cytoplasm</location>
    </subcellularLocation>
</comment>
<comment type="similarity">
    <text evidence="1">Belongs to the guanylate kinase family.</text>
</comment>
<reference key="1">
    <citation type="journal article" date="2004" name="Mol. Plant Microbe Interact.">
        <title>The genome sequence of the Gram-positive sugarcane pathogen Leifsonia xyli subsp. xyli.</title>
        <authorList>
            <person name="Monteiro-Vitorello C.B."/>
            <person name="Camargo L.E.A."/>
            <person name="Van Sluys M.A."/>
            <person name="Kitajima J.P."/>
            <person name="Truffi D."/>
            <person name="do Amaral A.M."/>
            <person name="Harakava R."/>
            <person name="de Oliveira J.C.F."/>
            <person name="Wood D."/>
            <person name="de Oliveira M.C."/>
            <person name="Miyaki C.Y."/>
            <person name="Takita M.A."/>
            <person name="da Silva A.C.R."/>
            <person name="Furlan L.R."/>
            <person name="Carraro D.M."/>
            <person name="Camarotte G."/>
            <person name="Almeida N.F. Jr."/>
            <person name="Carrer H."/>
            <person name="Coutinho L.L."/>
            <person name="El-Dorry H.A."/>
            <person name="Ferro M.I.T."/>
            <person name="Gagliardi P.R."/>
            <person name="Giglioti E."/>
            <person name="Goldman M.H.S."/>
            <person name="Goldman G.H."/>
            <person name="Kimura E.T."/>
            <person name="Ferro E.S."/>
            <person name="Kuramae E.E."/>
            <person name="Lemos E.G.M."/>
            <person name="Lemos M.V.F."/>
            <person name="Mauro S.M.Z."/>
            <person name="Machado M.A."/>
            <person name="Marino C.L."/>
            <person name="Menck C.F."/>
            <person name="Nunes L.R."/>
            <person name="Oliveira R.C."/>
            <person name="Pereira G.G."/>
            <person name="Siqueira W."/>
            <person name="de Souza A.A."/>
            <person name="Tsai S.M."/>
            <person name="Zanca A.S."/>
            <person name="Simpson A.J.G."/>
            <person name="Brumbley S.M."/>
            <person name="Setubal J.C."/>
        </authorList>
    </citation>
    <scope>NUCLEOTIDE SEQUENCE [LARGE SCALE GENOMIC DNA]</scope>
    <source>
        <strain>CTCB07</strain>
    </source>
</reference>
<feature type="chain" id="PRO_0000266343" description="Guanylate kinase">
    <location>
        <begin position="1"/>
        <end position="254"/>
    </location>
</feature>
<feature type="domain" description="Guanylate kinase-like" evidence="1">
    <location>
        <begin position="64"/>
        <end position="243"/>
    </location>
</feature>
<feature type="binding site" evidence="1">
    <location>
        <begin position="71"/>
        <end position="78"/>
    </location>
    <ligand>
        <name>ATP</name>
        <dbReference type="ChEBI" id="CHEBI:30616"/>
    </ligand>
</feature>